<name>GATB_SACD2</name>
<organism>
    <name type="scientific">Saccharophagus degradans (strain 2-40 / ATCC 43961 / DSM 17024)</name>
    <dbReference type="NCBI Taxonomy" id="203122"/>
    <lineage>
        <taxon>Bacteria</taxon>
        <taxon>Pseudomonadati</taxon>
        <taxon>Pseudomonadota</taxon>
        <taxon>Gammaproteobacteria</taxon>
        <taxon>Cellvibrionales</taxon>
        <taxon>Cellvibrionaceae</taxon>
        <taxon>Saccharophagus</taxon>
    </lineage>
</organism>
<keyword id="KW-0067">ATP-binding</keyword>
<keyword id="KW-0436">Ligase</keyword>
<keyword id="KW-0547">Nucleotide-binding</keyword>
<keyword id="KW-0648">Protein biosynthesis</keyword>
<keyword id="KW-1185">Reference proteome</keyword>
<proteinExistence type="inferred from homology"/>
<protein>
    <recommendedName>
        <fullName evidence="1">Aspartyl/glutamyl-tRNA(Asn/Gln) amidotransferase subunit B</fullName>
        <shortName evidence="1">Asp/Glu-ADT subunit B</shortName>
        <ecNumber evidence="1">6.3.5.-</ecNumber>
    </recommendedName>
</protein>
<comment type="function">
    <text evidence="1">Allows the formation of correctly charged Asn-tRNA(Asn) or Gln-tRNA(Gln) through the transamidation of misacylated Asp-tRNA(Asn) or Glu-tRNA(Gln) in organisms which lack either or both of asparaginyl-tRNA or glutaminyl-tRNA synthetases. The reaction takes place in the presence of glutamine and ATP through an activated phospho-Asp-tRNA(Asn) or phospho-Glu-tRNA(Gln).</text>
</comment>
<comment type="catalytic activity">
    <reaction evidence="1">
        <text>L-glutamyl-tRNA(Gln) + L-glutamine + ATP + H2O = L-glutaminyl-tRNA(Gln) + L-glutamate + ADP + phosphate + H(+)</text>
        <dbReference type="Rhea" id="RHEA:17521"/>
        <dbReference type="Rhea" id="RHEA-COMP:9681"/>
        <dbReference type="Rhea" id="RHEA-COMP:9684"/>
        <dbReference type="ChEBI" id="CHEBI:15377"/>
        <dbReference type="ChEBI" id="CHEBI:15378"/>
        <dbReference type="ChEBI" id="CHEBI:29985"/>
        <dbReference type="ChEBI" id="CHEBI:30616"/>
        <dbReference type="ChEBI" id="CHEBI:43474"/>
        <dbReference type="ChEBI" id="CHEBI:58359"/>
        <dbReference type="ChEBI" id="CHEBI:78520"/>
        <dbReference type="ChEBI" id="CHEBI:78521"/>
        <dbReference type="ChEBI" id="CHEBI:456216"/>
    </reaction>
</comment>
<comment type="catalytic activity">
    <reaction evidence="1">
        <text>L-aspartyl-tRNA(Asn) + L-glutamine + ATP + H2O = L-asparaginyl-tRNA(Asn) + L-glutamate + ADP + phosphate + 2 H(+)</text>
        <dbReference type="Rhea" id="RHEA:14513"/>
        <dbReference type="Rhea" id="RHEA-COMP:9674"/>
        <dbReference type="Rhea" id="RHEA-COMP:9677"/>
        <dbReference type="ChEBI" id="CHEBI:15377"/>
        <dbReference type="ChEBI" id="CHEBI:15378"/>
        <dbReference type="ChEBI" id="CHEBI:29985"/>
        <dbReference type="ChEBI" id="CHEBI:30616"/>
        <dbReference type="ChEBI" id="CHEBI:43474"/>
        <dbReference type="ChEBI" id="CHEBI:58359"/>
        <dbReference type="ChEBI" id="CHEBI:78515"/>
        <dbReference type="ChEBI" id="CHEBI:78516"/>
        <dbReference type="ChEBI" id="CHEBI:456216"/>
    </reaction>
</comment>
<comment type="subunit">
    <text evidence="1">Heterotrimer of A, B and C subunits.</text>
</comment>
<comment type="similarity">
    <text evidence="1">Belongs to the GatB/GatE family. GatB subfamily.</text>
</comment>
<feature type="chain" id="PRO_0000241273" description="Aspartyl/glutamyl-tRNA(Asn/Gln) amidotransferase subunit B">
    <location>
        <begin position="1"/>
        <end position="480"/>
    </location>
</feature>
<accession>Q21FS7</accession>
<evidence type="ECO:0000255" key="1">
    <source>
        <dbReference type="HAMAP-Rule" id="MF_00121"/>
    </source>
</evidence>
<gene>
    <name evidence="1" type="primary">gatB</name>
    <name type="ordered locus">Sde_3195</name>
</gene>
<dbReference type="EC" id="6.3.5.-" evidence="1"/>
<dbReference type="EMBL" id="CP000282">
    <property type="protein sequence ID" value="ABD82452.1"/>
    <property type="molecule type" value="Genomic_DNA"/>
</dbReference>
<dbReference type="RefSeq" id="WP_011469668.1">
    <property type="nucleotide sequence ID" value="NC_007912.1"/>
</dbReference>
<dbReference type="SMR" id="Q21FS7"/>
<dbReference type="STRING" id="203122.Sde_3195"/>
<dbReference type="GeneID" id="98614822"/>
<dbReference type="KEGG" id="sde:Sde_3195"/>
<dbReference type="eggNOG" id="COG0064">
    <property type="taxonomic scope" value="Bacteria"/>
</dbReference>
<dbReference type="HOGENOM" id="CLU_019240_0_0_6"/>
<dbReference type="OrthoDB" id="9804078at2"/>
<dbReference type="Proteomes" id="UP000001947">
    <property type="component" value="Chromosome"/>
</dbReference>
<dbReference type="GO" id="GO:0050566">
    <property type="term" value="F:asparaginyl-tRNA synthase (glutamine-hydrolyzing) activity"/>
    <property type="evidence" value="ECO:0007669"/>
    <property type="project" value="RHEA"/>
</dbReference>
<dbReference type="GO" id="GO:0005524">
    <property type="term" value="F:ATP binding"/>
    <property type="evidence" value="ECO:0007669"/>
    <property type="project" value="UniProtKB-KW"/>
</dbReference>
<dbReference type="GO" id="GO:0050567">
    <property type="term" value="F:glutaminyl-tRNA synthase (glutamine-hydrolyzing) activity"/>
    <property type="evidence" value="ECO:0007669"/>
    <property type="project" value="UniProtKB-UniRule"/>
</dbReference>
<dbReference type="GO" id="GO:0070681">
    <property type="term" value="P:glutaminyl-tRNAGln biosynthesis via transamidation"/>
    <property type="evidence" value="ECO:0007669"/>
    <property type="project" value="TreeGrafter"/>
</dbReference>
<dbReference type="GO" id="GO:0006412">
    <property type="term" value="P:translation"/>
    <property type="evidence" value="ECO:0007669"/>
    <property type="project" value="UniProtKB-UniRule"/>
</dbReference>
<dbReference type="FunFam" id="1.10.10.410:FF:000001">
    <property type="entry name" value="Aspartyl/glutamyl-tRNA(Asn/Gln) amidotransferase subunit B"/>
    <property type="match status" value="1"/>
</dbReference>
<dbReference type="FunFam" id="1.10.150.380:FF:000001">
    <property type="entry name" value="Aspartyl/glutamyl-tRNA(Asn/Gln) amidotransferase subunit B"/>
    <property type="match status" value="1"/>
</dbReference>
<dbReference type="Gene3D" id="1.10.10.410">
    <property type="match status" value="1"/>
</dbReference>
<dbReference type="Gene3D" id="1.10.150.380">
    <property type="entry name" value="GatB domain, N-terminal subdomain"/>
    <property type="match status" value="1"/>
</dbReference>
<dbReference type="HAMAP" id="MF_00121">
    <property type="entry name" value="GatB"/>
    <property type="match status" value="1"/>
</dbReference>
<dbReference type="InterPro" id="IPR017959">
    <property type="entry name" value="Asn/Gln-tRNA_amidoTrfase_suB/E"/>
</dbReference>
<dbReference type="InterPro" id="IPR006075">
    <property type="entry name" value="Asn/Gln-tRNA_Trfase_suB/E_cat"/>
</dbReference>
<dbReference type="InterPro" id="IPR018027">
    <property type="entry name" value="Asn/Gln_amidotransferase"/>
</dbReference>
<dbReference type="InterPro" id="IPR003789">
    <property type="entry name" value="Asn/Gln_tRNA_amidoTrase-B-like"/>
</dbReference>
<dbReference type="InterPro" id="IPR004413">
    <property type="entry name" value="GatB"/>
</dbReference>
<dbReference type="InterPro" id="IPR042114">
    <property type="entry name" value="GatB_C_1"/>
</dbReference>
<dbReference type="InterPro" id="IPR023168">
    <property type="entry name" value="GatB_Yqey_C_2"/>
</dbReference>
<dbReference type="InterPro" id="IPR017958">
    <property type="entry name" value="Gln-tRNA_amidoTrfase_suB_CS"/>
</dbReference>
<dbReference type="InterPro" id="IPR014746">
    <property type="entry name" value="Gln_synth/guanido_kin_cat_dom"/>
</dbReference>
<dbReference type="NCBIfam" id="TIGR00133">
    <property type="entry name" value="gatB"/>
    <property type="match status" value="1"/>
</dbReference>
<dbReference type="NCBIfam" id="NF004012">
    <property type="entry name" value="PRK05477.1-2"/>
    <property type="match status" value="1"/>
</dbReference>
<dbReference type="NCBIfam" id="NF004014">
    <property type="entry name" value="PRK05477.1-4"/>
    <property type="match status" value="1"/>
</dbReference>
<dbReference type="NCBIfam" id="NF004015">
    <property type="entry name" value="PRK05477.1-5"/>
    <property type="match status" value="1"/>
</dbReference>
<dbReference type="PANTHER" id="PTHR11659">
    <property type="entry name" value="GLUTAMYL-TRNA GLN AMIDOTRANSFERASE SUBUNIT B MITOCHONDRIAL AND PROKARYOTIC PET112-RELATED"/>
    <property type="match status" value="1"/>
</dbReference>
<dbReference type="PANTHER" id="PTHR11659:SF0">
    <property type="entry name" value="GLUTAMYL-TRNA(GLN) AMIDOTRANSFERASE SUBUNIT B, MITOCHONDRIAL"/>
    <property type="match status" value="1"/>
</dbReference>
<dbReference type="Pfam" id="PF02934">
    <property type="entry name" value="GatB_N"/>
    <property type="match status" value="1"/>
</dbReference>
<dbReference type="Pfam" id="PF02637">
    <property type="entry name" value="GatB_Yqey"/>
    <property type="match status" value="1"/>
</dbReference>
<dbReference type="SMART" id="SM00845">
    <property type="entry name" value="GatB_Yqey"/>
    <property type="match status" value="1"/>
</dbReference>
<dbReference type="SUPFAM" id="SSF89095">
    <property type="entry name" value="GatB/YqeY motif"/>
    <property type="match status" value="1"/>
</dbReference>
<dbReference type="SUPFAM" id="SSF55931">
    <property type="entry name" value="Glutamine synthetase/guanido kinase"/>
    <property type="match status" value="1"/>
</dbReference>
<dbReference type="PROSITE" id="PS01234">
    <property type="entry name" value="GATB"/>
    <property type="match status" value="1"/>
</dbReference>
<reference key="1">
    <citation type="journal article" date="2008" name="PLoS Genet.">
        <title>Complete genome sequence of the complex carbohydrate-degrading marine bacterium, Saccharophagus degradans strain 2-40 T.</title>
        <authorList>
            <person name="Weiner R.M."/>
            <person name="Taylor L.E. II"/>
            <person name="Henrissat B."/>
            <person name="Hauser L."/>
            <person name="Land M."/>
            <person name="Coutinho P.M."/>
            <person name="Rancurel C."/>
            <person name="Saunders E.H."/>
            <person name="Longmire A.G."/>
            <person name="Zhang H."/>
            <person name="Bayer E.A."/>
            <person name="Gilbert H.J."/>
            <person name="Larimer F."/>
            <person name="Zhulin I.B."/>
            <person name="Ekborg N.A."/>
            <person name="Lamed R."/>
            <person name="Richardson P.M."/>
            <person name="Borovok I."/>
            <person name="Hutcheson S."/>
        </authorList>
    </citation>
    <scope>NUCLEOTIDE SEQUENCE [LARGE SCALE GENOMIC DNA]</scope>
    <source>
        <strain>2-40 / ATCC 43961 / DSM 17024</strain>
    </source>
</reference>
<sequence>MEWETVIGLEVHVQLATKTKIFSGASTAFGAEPNTQACAIDLAMPGTLPSPNAKAFEYAIMFGLAVNAEIGKRSVFERKNYFYPDSPKGYQTTQLEQPIVGAGYIDIELDDGSTKRIRIHHAHLEEDAGKSLHEDFHDMTGIDLNRAGTPLIEVVTEPDISNKAEAVAFARKLHAIVTSLGIGDGDMSQGSMRFDVNISVRLKGQELGTRTETKNLNSFRFMERCIDQEVQRQIEVLEDGGKITQETRLYNGDTHTARPMRSKEEANDYRYFPCPDLLPVEITDEYIQSLRDKLPELPDARKARFIEQYGLSDYDAGLLGSDANTAHYFEVCAKACDDAKLSANWVAGELAARLNNEELAIQNSPVNAEQLAGLIARIKDQTISNKIAKQVFEAMWQGEGDADTVIEAKGLKQVSDSGALEKMVDDVMAANQQQVDAYRAAEPDKRKKMLGFFVGQIMKASKGQANPQQLNQILLSKLDS</sequence>